<organism>
    <name type="scientific">Carboxydothermus hydrogenoformans (strain ATCC BAA-161 / DSM 6008 / Z-2901)</name>
    <dbReference type="NCBI Taxonomy" id="246194"/>
    <lineage>
        <taxon>Bacteria</taxon>
        <taxon>Bacillati</taxon>
        <taxon>Bacillota</taxon>
        <taxon>Clostridia</taxon>
        <taxon>Thermoanaerobacterales</taxon>
        <taxon>Thermoanaerobacteraceae</taxon>
        <taxon>Carboxydothermus</taxon>
    </lineage>
</organism>
<proteinExistence type="inferred from homology"/>
<evidence type="ECO:0000255" key="1">
    <source>
        <dbReference type="HAMAP-Rule" id="MF_01507"/>
    </source>
</evidence>
<dbReference type="EMBL" id="CP000141">
    <property type="protein sequence ID" value="ABB15672.1"/>
    <property type="molecule type" value="Genomic_DNA"/>
</dbReference>
<dbReference type="RefSeq" id="WP_011343474.1">
    <property type="nucleotide sequence ID" value="NC_007503.1"/>
</dbReference>
<dbReference type="SMR" id="Q3AEN6"/>
<dbReference type="FunCoup" id="Q3AEN6">
    <property type="interactions" value="11"/>
</dbReference>
<dbReference type="STRING" id="246194.CHY_0540"/>
<dbReference type="KEGG" id="chy:CHY_0540"/>
<dbReference type="eggNOG" id="COG4472">
    <property type="taxonomic scope" value="Bacteria"/>
</dbReference>
<dbReference type="HOGENOM" id="CLU_162466_0_0_9"/>
<dbReference type="InParanoid" id="Q3AEN6"/>
<dbReference type="Proteomes" id="UP000002706">
    <property type="component" value="Chromosome"/>
</dbReference>
<dbReference type="HAMAP" id="MF_01507">
    <property type="entry name" value="UPF0297"/>
    <property type="match status" value="1"/>
</dbReference>
<dbReference type="InterPro" id="IPR009309">
    <property type="entry name" value="IreB"/>
</dbReference>
<dbReference type="NCBIfam" id="NF003997">
    <property type="entry name" value="PRK05473.1"/>
    <property type="match status" value="1"/>
</dbReference>
<dbReference type="PANTHER" id="PTHR40067">
    <property type="entry name" value="UPF0297 PROTEIN YRZL"/>
    <property type="match status" value="1"/>
</dbReference>
<dbReference type="PANTHER" id="PTHR40067:SF1">
    <property type="entry name" value="UPF0297 PROTEIN YRZL"/>
    <property type="match status" value="1"/>
</dbReference>
<dbReference type="Pfam" id="PF06135">
    <property type="entry name" value="IreB"/>
    <property type="match status" value="1"/>
</dbReference>
<dbReference type="PIRSF" id="PIRSF037258">
    <property type="entry name" value="DUF965_bac"/>
    <property type="match status" value="1"/>
</dbReference>
<accession>Q3AEN6</accession>
<reference key="1">
    <citation type="journal article" date="2005" name="PLoS Genet.">
        <title>Life in hot carbon monoxide: the complete genome sequence of Carboxydothermus hydrogenoformans Z-2901.</title>
        <authorList>
            <person name="Wu M."/>
            <person name="Ren Q."/>
            <person name="Durkin A.S."/>
            <person name="Daugherty S.C."/>
            <person name="Brinkac L.M."/>
            <person name="Dodson R.J."/>
            <person name="Madupu R."/>
            <person name="Sullivan S.A."/>
            <person name="Kolonay J.F."/>
            <person name="Nelson W.C."/>
            <person name="Tallon L.J."/>
            <person name="Jones K.M."/>
            <person name="Ulrich L.E."/>
            <person name="Gonzalez J.M."/>
            <person name="Zhulin I.B."/>
            <person name="Robb F.T."/>
            <person name="Eisen J.A."/>
        </authorList>
    </citation>
    <scope>NUCLEOTIDE SEQUENCE [LARGE SCALE GENOMIC DNA]</scope>
    <source>
        <strain>ATCC BAA-161 / DSM 6008 / Z-2901</strain>
    </source>
</reference>
<comment type="similarity">
    <text evidence="1">Belongs to the UPF0297 family.</text>
</comment>
<gene>
    <name type="ordered locus">CHY_0540</name>
</gene>
<name>Y540_CARHZ</name>
<keyword id="KW-1185">Reference proteome</keyword>
<sequence length="85" mass="10016">MGEDMEKTMRFGFDKEKNTKHKALLLTIYEALQEKGYNPINQLVGYLLSGDPAYITSHKNARNLIRKIERDELLEELLKVYLERE</sequence>
<protein>
    <recommendedName>
        <fullName evidence="1">UPF0297 protein CHY_0540</fullName>
    </recommendedName>
</protein>
<feature type="chain" id="PRO_0000236640" description="UPF0297 protein CHY_0540">
    <location>
        <begin position="1"/>
        <end position="85"/>
    </location>
</feature>